<keyword id="KW-0687">Ribonucleoprotein</keyword>
<keyword id="KW-0689">Ribosomal protein</keyword>
<feature type="chain" id="PRO_1000007608" description="Large ribosomal subunit protein uL29">
    <location>
        <begin position="1"/>
        <end position="63"/>
    </location>
</feature>
<comment type="similarity">
    <text evidence="1">Belongs to the universal ribosomal protein uL29 family.</text>
</comment>
<organism>
    <name type="scientific">Shigella flexneri serotype 5b (strain 8401)</name>
    <dbReference type="NCBI Taxonomy" id="373384"/>
    <lineage>
        <taxon>Bacteria</taxon>
        <taxon>Pseudomonadati</taxon>
        <taxon>Pseudomonadota</taxon>
        <taxon>Gammaproteobacteria</taxon>
        <taxon>Enterobacterales</taxon>
        <taxon>Enterobacteriaceae</taxon>
        <taxon>Shigella</taxon>
    </lineage>
</organism>
<name>RL29_SHIF8</name>
<sequence>MKAKELREKSVEELNTELLNLLREQFNLRMQAASGQLQQSHLLKQVRRDVARVKTLLNEKAGA</sequence>
<dbReference type="EMBL" id="CP000266">
    <property type="protein sequence ID" value="ABF05375.1"/>
    <property type="molecule type" value="Genomic_DNA"/>
</dbReference>
<dbReference type="RefSeq" id="WP_000644741.1">
    <property type="nucleotide sequence ID" value="NC_008258.1"/>
</dbReference>
<dbReference type="SMR" id="Q0SZZ0"/>
<dbReference type="GeneID" id="93778675"/>
<dbReference type="KEGG" id="sfv:SFV_3332"/>
<dbReference type="HOGENOM" id="CLU_158491_1_2_6"/>
<dbReference type="Proteomes" id="UP000000659">
    <property type="component" value="Chromosome"/>
</dbReference>
<dbReference type="GO" id="GO:0022625">
    <property type="term" value="C:cytosolic large ribosomal subunit"/>
    <property type="evidence" value="ECO:0007669"/>
    <property type="project" value="TreeGrafter"/>
</dbReference>
<dbReference type="GO" id="GO:0003735">
    <property type="term" value="F:structural constituent of ribosome"/>
    <property type="evidence" value="ECO:0007669"/>
    <property type="project" value="InterPro"/>
</dbReference>
<dbReference type="GO" id="GO:0006412">
    <property type="term" value="P:translation"/>
    <property type="evidence" value="ECO:0007669"/>
    <property type="project" value="UniProtKB-UniRule"/>
</dbReference>
<dbReference type="CDD" id="cd00427">
    <property type="entry name" value="Ribosomal_L29_HIP"/>
    <property type="match status" value="1"/>
</dbReference>
<dbReference type="Gene3D" id="6.10.140.1970">
    <property type="match status" value="1"/>
</dbReference>
<dbReference type="HAMAP" id="MF_00374">
    <property type="entry name" value="Ribosomal_uL29"/>
    <property type="match status" value="1"/>
</dbReference>
<dbReference type="InterPro" id="IPR050063">
    <property type="entry name" value="Ribosomal_protein_uL29"/>
</dbReference>
<dbReference type="InterPro" id="IPR001854">
    <property type="entry name" value="Ribosomal_uL29"/>
</dbReference>
<dbReference type="InterPro" id="IPR018254">
    <property type="entry name" value="Ribosomal_uL29_CS"/>
</dbReference>
<dbReference type="InterPro" id="IPR036049">
    <property type="entry name" value="Ribosomal_uL29_sf"/>
</dbReference>
<dbReference type="NCBIfam" id="TIGR00012">
    <property type="entry name" value="L29"/>
    <property type="match status" value="1"/>
</dbReference>
<dbReference type="PANTHER" id="PTHR10916">
    <property type="entry name" value="60S RIBOSOMAL PROTEIN L35/50S RIBOSOMAL PROTEIN L29"/>
    <property type="match status" value="1"/>
</dbReference>
<dbReference type="PANTHER" id="PTHR10916:SF0">
    <property type="entry name" value="LARGE RIBOSOMAL SUBUNIT PROTEIN UL29C"/>
    <property type="match status" value="1"/>
</dbReference>
<dbReference type="Pfam" id="PF00831">
    <property type="entry name" value="Ribosomal_L29"/>
    <property type="match status" value="1"/>
</dbReference>
<dbReference type="SUPFAM" id="SSF46561">
    <property type="entry name" value="Ribosomal protein L29 (L29p)"/>
    <property type="match status" value="1"/>
</dbReference>
<dbReference type="PROSITE" id="PS00579">
    <property type="entry name" value="RIBOSOMAL_L29"/>
    <property type="match status" value="1"/>
</dbReference>
<gene>
    <name evidence="1" type="primary">rpmC</name>
    <name type="ordered locus">SFV_3332</name>
</gene>
<accession>Q0SZZ0</accession>
<reference key="1">
    <citation type="journal article" date="2006" name="BMC Genomics">
        <title>Complete genome sequence of Shigella flexneri 5b and comparison with Shigella flexneri 2a.</title>
        <authorList>
            <person name="Nie H."/>
            <person name="Yang F."/>
            <person name="Zhang X."/>
            <person name="Yang J."/>
            <person name="Chen L."/>
            <person name="Wang J."/>
            <person name="Xiong Z."/>
            <person name="Peng J."/>
            <person name="Sun L."/>
            <person name="Dong J."/>
            <person name="Xue Y."/>
            <person name="Xu X."/>
            <person name="Chen S."/>
            <person name="Yao Z."/>
            <person name="Shen Y."/>
            <person name="Jin Q."/>
        </authorList>
    </citation>
    <scope>NUCLEOTIDE SEQUENCE [LARGE SCALE GENOMIC DNA]</scope>
    <source>
        <strain>8401</strain>
    </source>
</reference>
<protein>
    <recommendedName>
        <fullName evidence="1">Large ribosomal subunit protein uL29</fullName>
    </recommendedName>
    <alternativeName>
        <fullName evidence="2">50S ribosomal protein L29</fullName>
    </alternativeName>
</protein>
<evidence type="ECO:0000255" key="1">
    <source>
        <dbReference type="HAMAP-Rule" id="MF_00374"/>
    </source>
</evidence>
<evidence type="ECO:0000305" key="2"/>
<proteinExistence type="inferred from homology"/>